<feature type="chain" id="PRO_1000088393" description="RNA polymerase-associated protein RapA">
    <location>
        <begin position="1"/>
        <end position="968"/>
    </location>
</feature>
<feature type="domain" description="Helicase ATP-binding" evidence="1">
    <location>
        <begin position="164"/>
        <end position="334"/>
    </location>
</feature>
<feature type="domain" description="Helicase C-terminal" evidence="1">
    <location>
        <begin position="490"/>
        <end position="662"/>
    </location>
</feature>
<feature type="short sequence motif" description="DEAH box">
    <location>
        <begin position="280"/>
        <end position="283"/>
    </location>
</feature>
<feature type="binding site" evidence="1">
    <location>
        <begin position="177"/>
        <end position="184"/>
    </location>
    <ligand>
        <name>ATP</name>
        <dbReference type="ChEBI" id="CHEBI:30616"/>
    </ligand>
</feature>
<protein>
    <recommendedName>
        <fullName evidence="1">RNA polymerase-associated protein RapA</fullName>
        <ecNumber evidence="1">3.6.4.-</ecNumber>
    </recommendedName>
    <alternativeName>
        <fullName evidence="1">ATP-dependent helicase HepA</fullName>
    </alternativeName>
</protein>
<name>RAPA_SHIDS</name>
<proteinExistence type="inferred from homology"/>
<dbReference type="EC" id="3.6.4.-" evidence="1"/>
<dbReference type="EMBL" id="CP000034">
    <property type="protein sequence ID" value="ABB60321.1"/>
    <property type="molecule type" value="Genomic_DNA"/>
</dbReference>
<dbReference type="RefSeq" id="WP_001117038.1">
    <property type="nucleotide sequence ID" value="NC_007606.1"/>
</dbReference>
<dbReference type="RefSeq" id="YP_401810.1">
    <property type="nucleotide sequence ID" value="NC_007606.1"/>
</dbReference>
<dbReference type="SMR" id="Q32K36"/>
<dbReference type="STRING" id="300267.SDY_0083"/>
<dbReference type="EnsemblBacteria" id="ABB60321">
    <property type="protein sequence ID" value="ABB60321"/>
    <property type="gene ID" value="SDY_0083"/>
</dbReference>
<dbReference type="KEGG" id="sdy:SDY_0083"/>
<dbReference type="PATRIC" id="fig|300267.13.peg.93"/>
<dbReference type="HOGENOM" id="CLU_011520_0_0_6"/>
<dbReference type="Proteomes" id="UP000002716">
    <property type="component" value="Chromosome"/>
</dbReference>
<dbReference type="GO" id="GO:0005524">
    <property type="term" value="F:ATP binding"/>
    <property type="evidence" value="ECO:0007669"/>
    <property type="project" value="UniProtKB-UniRule"/>
</dbReference>
<dbReference type="GO" id="GO:0003677">
    <property type="term" value="F:DNA binding"/>
    <property type="evidence" value="ECO:0007669"/>
    <property type="project" value="UniProtKB-KW"/>
</dbReference>
<dbReference type="GO" id="GO:0004386">
    <property type="term" value="F:helicase activity"/>
    <property type="evidence" value="ECO:0007669"/>
    <property type="project" value="UniProtKB-UniRule"/>
</dbReference>
<dbReference type="GO" id="GO:0016817">
    <property type="term" value="F:hydrolase activity, acting on acid anhydrides"/>
    <property type="evidence" value="ECO:0007669"/>
    <property type="project" value="InterPro"/>
</dbReference>
<dbReference type="GO" id="GO:0006355">
    <property type="term" value="P:regulation of DNA-templated transcription"/>
    <property type="evidence" value="ECO:0007669"/>
    <property type="project" value="UniProtKB-UniRule"/>
</dbReference>
<dbReference type="CDD" id="cd18011">
    <property type="entry name" value="DEXDc_RapA"/>
    <property type="match status" value="1"/>
</dbReference>
<dbReference type="CDD" id="cd18793">
    <property type="entry name" value="SF2_C_SNF"/>
    <property type="match status" value="1"/>
</dbReference>
<dbReference type="FunFam" id="2.30.30.140:FF:000020">
    <property type="entry name" value="RNA polymerase-associated protein RapA"/>
    <property type="match status" value="1"/>
</dbReference>
<dbReference type="FunFam" id="2.30.30.930:FF:000001">
    <property type="entry name" value="RNA polymerase-associated protein RapA"/>
    <property type="match status" value="1"/>
</dbReference>
<dbReference type="FunFam" id="3.30.360.80:FF:000001">
    <property type="entry name" value="RNA polymerase-associated protein RapA"/>
    <property type="match status" value="1"/>
</dbReference>
<dbReference type="FunFam" id="3.40.50.10810:FF:000012">
    <property type="entry name" value="RNA polymerase-associated protein RapA"/>
    <property type="match status" value="1"/>
</dbReference>
<dbReference type="FunFam" id="3.40.50.300:FF:000350">
    <property type="entry name" value="RNA polymerase-associated protein RapA"/>
    <property type="match status" value="1"/>
</dbReference>
<dbReference type="Gene3D" id="2.30.30.140">
    <property type="match status" value="1"/>
</dbReference>
<dbReference type="Gene3D" id="2.30.30.930">
    <property type="match status" value="1"/>
</dbReference>
<dbReference type="Gene3D" id="3.30.360.80">
    <property type="match status" value="1"/>
</dbReference>
<dbReference type="Gene3D" id="6.10.140.1500">
    <property type="match status" value="1"/>
</dbReference>
<dbReference type="Gene3D" id="6.10.140.2230">
    <property type="match status" value="1"/>
</dbReference>
<dbReference type="Gene3D" id="3.40.50.300">
    <property type="entry name" value="P-loop containing nucleotide triphosphate hydrolases"/>
    <property type="match status" value="1"/>
</dbReference>
<dbReference type="Gene3D" id="3.40.50.10810">
    <property type="entry name" value="Tandem AAA-ATPase domain"/>
    <property type="match status" value="1"/>
</dbReference>
<dbReference type="HAMAP" id="MF_01821">
    <property type="entry name" value="Helicase_RapA"/>
    <property type="match status" value="1"/>
</dbReference>
<dbReference type="InterPro" id="IPR014001">
    <property type="entry name" value="Helicase_ATP-bd"/>
</dbReference>
<dbReference type="InterPro" id="IPR001650">
    <property type="entry name" value="Helicase_C-like"/>
</dbReference>
<dbReference type="InterPro" id="IPR023949">
    <property type="entry name" value="Helicase_RapA"/>
</dbReference>
<dbReference type="InterPro" id="IPR027417">
    <property type="entry name" value="P-loop_NTPase"/>
</dbReference>
<dbReference type="InterPro" id="IPR022737">
    <property type="entry name" value="RapA_C"/>
</dbReference>
<dbReference type="InterPro" id="IPR038718">
    <property type="entry name" value="SNF2-like_sf"/>
</dbReference>
<dbReference type="InterPro" id="IPR049730">
    <property type="entry name" value="SNF2/RAD54-like_C"/>
</dbReference>
<dbReference type="InterPro" id="IPR000330">
    <property type="entry name" value="SNF2_N"/>
</dbReference>
<dbReference type="InterPro" id="IPR040765">
    <property type="entry name" value="Tudor_1_RapA"/>
</dbReference>
<dbReference type="InterPro" id="IPR040766">
    <property type="entry name" value="Tudor_2_RapA"/>
</dbReference>
<dbReference type="NCBIfam" id="NF003426">
    <property type="entry name" value="PRK04914.1"/>
    <property type="match status" value="1"/>
</dbReference>
<dbReference type="PANTHER" id="PTHR45766">
    <property type="entry name" value="DNA ANNEALING HELICASE AND ENDONUCLEASE ZRANB3 FAMILY MEMBER"/>
    <property type="match status" value="1"/>
</dbReference>
<dbReference type="PANTHER" id="PTHR45766:SF6">
    <property type="entry name" value="SWI_SNF-RELATED MATRIX-ASSOCIATED ACTIN-DEPENDENT REGULATOR OF CHROMATIN SUBFAMILY A-LIKE PROTEIN 1"/>
    <property type="match status" value="1"/>
</dbReference>
<dbReference type="Pfam" id="PF00271">
    <property type="entry name" value="Helicase_C"/>
    <property type="match status" value="1"/>
</dbReference>
<dbReference type="Pfam" id="PF12137">
    <property type="entry name" value="RapA_C"/>
    <property type="match status" value="1"/>
</dbReference>
<dbReference type="Pfam" id="PF00176">
    <property type="entry name" value="SNF2-rel_dom"/>
    <property type="match status" value="1"/>
</dbReference>
<dbReference type="Pfam" id="PF18339">
    <property type="entry name" value="Tudor_1_RapA"/>
    <property type="match status" value="1"/>
</dbReference>
<dbReference type="Pfam" id="PF18337">
    <property type="entry name" value="Tudor_RapA"/>
    <property type="match status" value="1"/>
</dbReference>
<dbReference type="SMART" id="SM00487">
    <property type="entry name" value="DEXDc"/>
    <property type="match status" value="1"/>
</dbReference>
<dbReference type="SMART" id="SM00490">
    <property type="entry name" value="HELICc"/>
    <property type="match status" value="1"/>
</dbReference>
<dbReference type="SUPFAM" id="SSF52540">
    <property type="entry name" value="P-loop containing nucleoside triphosphate hydrolases"/>
    <property type="match status" value="2"/>
</dbReference>
<dbReference type="PROSITE" id="PS51192">
    <property type="entry name" value="HELICASE_ATP_BIND_1"/>
    <property type="match status" value="1"/>
</dbReference>
<dbReference type="PROSITE" id="PS51194">
    <property type="entry name" value="HELICASE_CTER"/>
    <property type="match status" value="1"/>
</dbReference>
<evidence type="ECO:0000255" key="1">
    <source>
        <dbReference type="HAMAP-Rule" id="MF_01821"/>
    </source>
</evidence>
<organism>
    <name type="scientific">Shigella dysenteriae serotype 1 (strain Sd197)</name>
    <dbReference type="NCBI Taxonomy" id="300267"/>
    <lineage>
        <taxon>Bacteria</taxon>
        <taxon>Pseudomonadati</taxon>
        <taxon>Pseudomonadota</taxon>
        <taxon>Gammaproteobacteria</taxon>
        <taxon>Enterobacterales</taxon>
        <taxon>Enterobacteriaceae</taxon>
        <taxon>Shigella</taxon>
    </lineage>
</organism>
<keyword id="KW-0010">Activator</keyword>
<keyword id="KW-0067">ATP-binding</keyword>
<keyword id="KW-0238">DNA-binding</keyword>
<keyword id="KW-0347">Helicase</keyword>
<keyword id="KW-0378">Hydrolase</keyword>
<keyword id="KW-0547">Nucleotide-binding</keyword>
<keyword id="KW-1185">Reference proteome</keyword>
<keyword id="KW-0804">Transcription</keyword>
<keyword id="KW-0805">Transcription regulation</keyword>
<accession>Q32K36</accession>
<gene>
    <name evidence="1" type="primary">rapA</name>
    <name type="ordered locus">SDY_0083</name>
</gene>
<comment type="function">
    <text evidence="1">Transcription regulator that activates transcription by stimulating RNA polymerase (RNAP) recycling in case of stress conditions such as supercoiled DNA or high salt concentrations. Probably acts by releasing the RNAP, when it is trapped or immobilized on tightly supercoiled DNA. Does not activate transcription on linear DNA. Probably not involved in DNA repair.</text>
</comment>
<comment type="subunit">
    <text evidence="1">Interacts with the RNAP. Has a higher affinity for the core RNAP than for the holoenzyme. Its ATPase activity is stimulated by binding to RNAP.</text>
</comment>
<comment type="similarity">
    <text evidence="1">Belongs to the SNF2/RAD54 helicase family. RapA subfamily.</text>
</comment>
<sequence length="968" mass="109809">MPFTLGQRWISDTESELGLGTVVAVDARTVTLLFPSTGENRLYARSDSPVTRVMFNPGDTITSHDGWQMQVEEVKEENGLLTYIGTRRDTEESGVALREVFLDSKLVFSKPQDRLFAGQIDRMDRFALRYRARKYSSEQFRMPYSGLRGQRTSLIPHQLNIAHDVGRRHAPRVLLADEVGLGKTIEAGMILHQQLLSGAAERVLIIVPETLQHQWLVEMLRRFNLRFALFDDERYAEAQHDAYNPFDTEQLVICSPDFVRRSKQRLEHLCEAEWDLLVVDEAHHLVWSEDAPSREYQAIEQLAEHVPGVLLLTATPEQLGMESHFARLRLLDPNRFHDFAQFVEEQKNYRPVADAVAMLLAGNKLSNDELNMLGEMIGEQDIEPLLQAANSDSEDAQSARQELVSMLMDRHGTSRVLFRNTRNGVKGFPKRELHTIKLPLPTQYQTAIKVSGIMGARKSAEDRARDMLYPERIYQEFEGDNATWWNFDPRVEWLMGYLTSHRSQKVLVICAKAATALQLEQVLREREGIRAAVFHEGMSIIERDRAAAWFAEEDTGAQVLLCSEIGSEGRNFQFASHMVMFDLPFNPDLLEQRIGRLDRIGQAHDIQIHVPYLEKTAQSVLVRWYHEGLDAFEHTCPTGRTIYDSVYNDLINYLASPDQTEGFDDLIKNCREQHEALKAQLEQGRDRLLEIHSNGGEKAQALAESIEEQDDDTNLIAFAMNLFDIIGINQDDRGDNMIVLTPSDHMLVPDFPGLSEDGITITFDREVALAREDAQFITWEHPLIRNGLDLILSGDTGSSTISLLKNKALPVGTLLVELIYVVEAQAPKQLQLNRFLPPTPVRMLLDKNGNNLAALVEFETFNRQLNAVNRHTGSKLVNAVQQDVHAILQLGEAQIEKSARALIDAARNEADEKLSAELSRLEALRAVNPNIRDDELTAIESNRQQVMESLDQAGWRLDALRLIVVTHQ</sequence>
<reference key="1">
    <citation type="journal article" date="2005" name="Nucleic Acids Res.">
        <title>Genome dynamics and diversity of Shigella species, the etiologic agents of bacillary dysentery.</title>
        <authorList>
            <person name="Yang F."/>
            <person name="Yang J."/>
            <person name="Zhang X."/>
            <person name="Chen L."/>
            <person name="Jiang Y."/>
            <person name="Yan Y."/>
            <person name="Tang X."/>
            <person name="Wang J."/>
            <person name="Xiong Z."/>
            <person name="Dong J."/>
            <person name="Xue Y."/>
            <person name="Zhu Y."/>
            <person name="Xu X."/>
            <person name="Sun L."/>
            <person name="Chen S."/>
            <person name="Nie H."/>
            <person name="Peng J."/>
            <person name="Xu J."/>
            <person name="Wang Y."/>
            <person name="Yuan Z."/>
            <person name="Wen Y."/>
            <person name="Yao Z."/>
            <person name="Shen Y."/>
            <person name="Qiang B."/>
            <person name="Hou Y."/>
            <person name="Yu J."/>
            <person name="Jin Q."/>
        </authorList>
    </citation>
    <scope>NUCLEOTIDE SEQUENCE [LARGE SCALE GENOMIC DNA]</scope>
    <source>
        <strain>Sd197</strain>
    </source>
</reference>